<evidence type="ECO:0000255" key="1">
    <source>
        <dbReference type="PROSITE-ProRule" id="PRU00108"/>
    </source>
</evidence>
<evidence type="ECO:0000256" key="2">
    <source>
        <dbReference type="SAM" id="MobiDB-lite"/>
    </source>
</evidence>
<evidence type="ECO:0000269" key="3">
    <source>
    </source>
</evidence>
<evidence type="ECO:0000269" key="4">
    <source>
    </source>
</evidence>
<evidence type="ECO:0000269" key="5">
    <source>
    </source>
</evidence>
<evidence type="ECO:0000305" key="6"/>
<gene>
    <name type="primary">HOX4</name>
    <name type="ORF">OsI_030676</name>
</gene>
<comment type="function">
    <text evidence="3 5">Probable transcription activator that binds to the DNA sequence 5'-CAAT[AT]ATTG-3'. May be involved in the regulation of gibberellin signaling.</text>
</comment>
<comment type="subunit">
    <text evidence="3 6">Homodimer (Probable). May form a heterodimer with HOX5.</text>
</comment>
<comment type="subcellular location">
    <subcellularLocation>
        <location evidence="1 5">Nucleus</location>
    </subcellularLocation>
</comment>
<comment type="tissue specificity">
    <text evidence="3 4 5">Expressed in leaf and floral organ primordia, floral meristems, embryonic axis and cells surrounding the vascular bundles. Expressed in the vasculature of roots, stem, leaves and spikelets, and in the vascular bundle of the scutellum in embryos.</text>
</comment>
<comment type="induction">
    <text evidence="4 5">By gibberellin. Down-regulated in leaves by drought stress.</text>
</comment>
<comment type="similarity">
    <text evidence="6">Belongs to the HD-ZIP homeobox family. Class I subfamily.</text>
</comment>
<feature type="chain" id="PRO_0000331680" description="Homeobox-leucine zipper protein HOX4">
    <location>
        <begin position="1"/>
        <end position="277"/>
    </location>
</feature>
<feature type="DNA-binding region" description="Homeobox" evidence="1">
    <location>
        <begin position="48"/>
        <end position="107"/>
    </location>
</feature>
<feature type="region of interest" description="Disordered" evidence="2">
    <location>
        <begin position="1"/>
        <end position="35"/>
    </location>
</feature>
<feature type="region of interest" description="Leucine-zipper">
    <location>
        <begin position="106"/>
        <end position="150"/>
    </location>
</feature>
<feature type="region of interest" description="Disordered" evidence="2">
    <location>
        <begin position="154"/>
        <end position="180"/>
    </location>
</feature>
<feature type="region of interest" description="Disordered" evidence="2">
    <location>
        <begin position="250"/>
        <end position="277"/>
    </location>
</feature>
<feature type="compositionally biased region" description="Gly residues" evidence="2">
    <location>
        <begin position="1"/>
        <end position="13"/>
    </location>
</feature>
<feature type="compositionally biased region" description="Polar residues" evidence="2">
    <location>
        <begin position="15"/>
        <end position="24"/>
    </location>
</feature>
<feature type="compositionally biased region" description="Low complexity" evidence="2">
    <location>
        <begin position="171"/>
        <end position="180"/>
    </location>
</feature>
<sequence>MKRPGGAGGGGGSPSLVTMANSSDDGYGGVGMEAEGDVEEEMMACGGGGEKKRRLSVEQVRALERSFEVENKLEPERKARLARDLGLQPRQVAVWFQNRRARWKTKQLERDYAALRHSYDSLRLDHDALRRDKDALLAEIKELKAKLGDEEAAASFTSVKEEPAASDGPPAAGFGSSDSDSSAVLNDVDAAGAAPAATDALAPEACTFLGAPPAAGAGAGAAAAASHEEVFFHGNFLKVEEDETGFLDDDEPCGGFFADDQPPPLSSWWAEPTEHWN</sequence>
<proteinExistence type="evidence at protein level"/>
<keyword id="KW-0010">Activator</keyword>
<keyword id="KW-0238">DNA-binding</keyword>
<keyword id="KW-0371">Homeobox</keyword>
<keyword id="KW-0539">Nucleus</keyword>
<keyword id="KW-1185">Reference proteome</keyword>
<keyword id="KW-0804">Transcription</keyword>
<keyword id="KW-0805">Transcription regulation</keyword>
<protein>
    <recommendedName>
        <fullName>Homeobox-leucine zipper protein HOX4</fullName>
    </recommendedName>
    <alternativeName>
        <fullName>HD-ZIP protein HOX4</fullName>
    </alternativeName>
    <alternativeName>
        <fullName>Homeodomain transcription factor HOX4</fullName>
    </alternativeName>
    <alternativeName>
        <fullName>OsHox4</fullName>
    </alternativeName>
</protein>
<accession>Q9XH37</accession>
<accession>A2Z283</accession>
<accession>A5JPU1</accession>
<dbReference type="EMBL" id="AF145728">
    <property type="protein sequence ID" value="AAD37697.1"/>
    <property type="molecule type" value="mRNA"/>
</dbReference>
<dbReference type="EMBL" id="CM000134">
    <property type="status" value="NOT_ANNOTATED_CDS"/>
    <property type="molecule type" value="Genomic_DNA"/>
</dbReference>
<dbReference type="EMBL" id="EF555524">
    <property type="protein sequence ID" value="ABQ57267.1"/>
    <property type="molecule type" value="mRNA"/>
</dbReference>
<dbReference type="SMR" id="Q9XH37"/>
<dbReference type="EnsemblPlants" id="BGIOSGA030941-TA">
    <property type="protein sequence ID" value="BGIOSGA030941-PA"/>
    <property type="gene ID" value="BGIOSGA030941"/>
</dbReference>
<dbReference type="EnsemblPlants" id="OsGoSa_09g0013510.01">
    <property type="protein sequence ID" value="OsGoSa_09g0013510.01"/>
    <property type="gene ID" value="OsGoSa_09g0013510"/>
</dbReference>
<dbReference type="EnsemblPlants" id="OsIR64_09g0013620.01">
    <property type="protein sequence ID" value="OsIR64_09g0013620.01"/>
    <property type="gene ID" value="OsIR64_09g0013620"/>
</dbReference>
<dbReference type="EnsemblPlants" id="OsKYG_09g0013420.01">
    <property type="protein sequence ID" value="OsKYG_09g0013420.01"/>
    <property type="gene ID" value="OsKYG_09g0013420"/>
</dbReference>
<dbReference type="EnsemblPlants" id="OsLaMu_09g0013440.01">
    <property type="protein sequence ID" value="OsLaMu_09g0013440.01"/>
    <property type="gene ID" value="OsLaMu_09g0013440"/>
</dbReference>
<dbReference type="EnsemblPlants" id="OsLima_09g0013610.01">
    <property type="protein sequence ID" value="OsLima_09g0013610.01"/>
    <property type="gene ID" value="OsLima_09g0013610"/>
</dbReference>
<dbReference type="EnsemblPlants" id="OsLiXu_09g0013380.01">
    <property type="protein sequence ID" value="OsLiXu_09g0013380.01"/>
    <property type="gene ID" value="OsLiXu_09g0013380"/>
</dbReference>
<dbReference type="EnsemblPlants" id="OsMH63_09G014100_01">
    <property type="protein sequence ID" value="OsMH63_09G014100_01"/>
    <property type="gene ID" value="OsMH63_09G014100"/>
</dbReference>
<dbReference type="EnsemblPlants" id="OsPr106_09g0013720.01">
    <property type="protein sequence ID" value="OsPr106_09g0013720.01"/>
    <property type="gene ID" value="OsPr106_09g0013720"/>
</dbReference>
<dbReference type="EnsemblPlants" id="OsZS97_09G013640_01">
    <property type="protein sequence ID" value="OsZS97_09G013640_01"/>
    <property type="gene ID" value="OsZS97_09G013640"/>
</dbReference>
<dbReference type="Gramene" id="BGIOSGA030941-TA">
    <property type="protein sequence ID" value="BGIOSGA030941-PA"/>
    <property type="gene ID" value="BGIOSGA030941"/>
</dbReference>
<dbReference type="Gramene" id="OsGoSa_09g0013510.01">
    <property type="protein sequence ID" value="OsGoSa_09g0013510.01"/>
    <property type="gene ID" value="OsGoSa_09g0013510"/>
</dbReference>
<dbReference type="Gramene" id="OsIR64_09g0013620.01">
    <property type="protein sequence ID" value="OsIR64_09g0013620.01"/>
    <property type="gene ID" value="OsIR64_09g0013620"/>
</dbReference>
<dbReference type="Gramene" id="OsKYG_09g0013420.01">
    <property type="protein sequence ID" value="OsKYG_09g0013420.01"/>
    <property type="gene ID" value="OsKYG_09g0013420"/>
</dbReference>
<dbReference type="Gramene" id="OsLaMu_09g0013440.01">
    <property type="protein sequence ID" value="OsLaMu_09g0013440.01"/>
    <property type="gene ID" value="OsLaMu_09g0013440"/>
</dbReference>
<dbReference type="Gramene" id="OsLima_09g0013610.01">
    <property type="protein sequence ID" value="OsLima_09g0013610.01"/>
    <property type="gene ID" value="OsLima_09g0013610"/>
</dbReference>
<dbReference type="Gramene" id="OsLiXu_09g0013380.01">
    <property type="protein sequence ID" value="OsLiXu_09g0013380.01"/>
    <property type="gene ID" value="OsLiXu_09g0013380"/>
</dbReference>
<dbReference type="Gramene" id="OsMH63_09G014100_01">
    <property type="protein sequence ID" value="OsMH63_09G014100_01"/>
    <property type="gene ID" value="OsMH63_09G014100"/>
</dbReference>
<dbReference type="Gramene" id="OsPr106_09g0013720.01">
    <property type="protein sequence ID" value="OsPr106_09g0013720.01"/>
    <property type="gene ID" value="OsPr106_09g0013720"/>
</dbReference>
<dbReference type="Gramene" id="OsZS97_09G013640_01">
    <property type="protein sequence ID" value="OsZS97_09G013640_01"/>
    <property type="gene ID" value="OsZS97_09G013640"/>
</dbReference>
<dbReference type="HOGENOM" id="CLU_060842_1_0_1"/>
<dbReference type="OMA" id="SWWTEPT"/>
<dbReference type="OrthoDB" id="6159439at2759"/>
<dbReference type="Proteomes" id="UP000007015">
    <property type="component" value="Chromosome 9"/>
</dbReference>
<dbReference type="GO" id="GO:0005634">
    <property type="term" value="C:nucleus"/>
    <property type="evidence" value="ECO:0007669"/>
    <property type="project" value="UniProtKB-SubCell"/>
</dbReference>
<dbReference type="GO" id="GO:0000981">
    <property type="term" value="F:DNA-binding transcription factor activity, RNA polymerase II-specific"/>
    <property type="evidence" value="ECO:0007669"/>
    <property type="project" value="InterPro"/>
</dbReference>
<dbReference type="GO" id="GO:0043565">
    <property type="term" value="F:sequence-specific DNA binding"/>
    <property type="evidence" value="ECO:0007669"/>
    <property type="project" value="InterPro"/>
</dbReference>
<dbReference type="GO" id="GO:0045893">
    <property type="term" value="P:positive regulation of DNA-templated transcription"/>
    <property type="evidence" value="ECO:0007669"/>
    <property type="project" value="TreeGrafter"/>
</dbReference>
<dbReference type="CDD" id="cd00086">
    <property type="entry name" value="homeodomain"/>
    <property type="match status" value="1"/>
</dbReference>
<dbReference type="FunFam" id="1.10.10.60:FF:000159">
    <property type="entry name" value="Homeobox-leucine zipper protein HAT5"/>
    <property type="match status" value="1"/>
</dbReference>
<dbReference type="Gene3D" id="1.10.10.60">
    <property type="entry name" value="Homeodomain-like"/>
    <property type="match status" value="1"/>
</dbReference>
<dbReference type="InterPro" id="IPR001356">
    <property type="entry name" value="HD"/>
</dbReference>
<dbReference type="InterPro" id="IPR045224">
    <property type="entry name" value="HDZip_class_I_plant"/>
</dbReference>
<dbReference type="InterPro" id="IPR017970">
    <property type="entry name" value="Homeobox_CS"/>
</dbReference>
<dbReference type="InterPro" id="IPR009057">
    <property type="entry name" value="Homeodomain-like_sf"/>
</dbReference>
<dbReference type="InterPro" id="IPR000047">
    <property type="entry name" value="HTH_motif"/>
</dbReference>
<dbReference type="InterPro" id="IPR003106">
    <property type="entry name" value="Leu_zip_homeo"/>
</dbReference>
<dbReference type="PANTHER" id="PTHR24326">
    <property type="entry name" value="HOMEOBOX-LEUCINE ZIPPER PROTEIN"/>
    <property type="match status" value="1"/>
</dbReference>
<dbReference type="PANTHER" id="PTHR24326:SF547">
    <property type="entry name" value="HOMEOBOX-LEUCINE ZIPPER PROTEIN ATHB-6"/>
    <property type="match status" value="1"/>
</dbReference>
<dbReference type="Pfam" id="PF02183">
    <property type="entry name" value="HALZ"/>
    <property type="match status" value="1"/>
</dbReference>
<dbReference type="Pfam" id="PF00046">
    <property type="entry name" value="Homeodomain"/>
    <property type="match status" value="1"/>
</dbReference>
<dbReference type="PRINTS" id="PR00031">
    <property type="entry name" value="HTHREPRESSR"/>
</dbReference>
<dbReference type="SMART" id="SM00389">
    <property type="entry name" value="HOX"/>
    <property type="match status" value="1"/>
</dbReference>
<dbReference type="SUPFAM" id="SSF46689">
    <property type="entry name" value="Homeodomain-like"/>
    <property type="match status" value="1"/>
</dbReference>
<dbReference type="PROSITE" id="PS00027">
    <property type="entry name" value="HOMEOBOX_1"/>
    <property type="match status" value="1"/>
</dbReference>
<dbReference type="PROSITE" id="PS50071">
    <property type="entry name" value="HOMEOBOX_2"/>
    <property type="match status" value="1"/>
</dbReference>
<reference key="1">
    <citation type="journal article" date="2000" name="Mol. Gen. Genet.">
        <title>HD-Zip proteins of families I and II from rice: interactions and functional properties.</title>
        <authorList>
            <person name="Meijer A.H."/>
            <person name="de Kam R.J."/>
            <person name="d'Erfurth I."/>
            <person name="Shen W.-B."/>
            <person name="Hoge J.H.C."/>
        </authorList>
    </citation>
    <scope>NUCLEOTIDE SEQUENCE [MRNA]</scope>
    <scope>FUNCTION</scope>
    <scope>SUBUNIT</scope>
    <scope>TISSUE SPECIFICITY</scope>
    <source>
        <strain>cv. IR58</strain>
        <tissue>Seed embryo</tissue>
    </source>
</reference>
<reference key="2">
    <citation type="journal article" date="2005" name="PLoS Biol.">
        <title>The genomes of Oryza sativa: a history of duplications.</title>
        <authorList>
            <person name="Yu J."/>
            <person name="Wang J."/>
            <person name="Lin W."/>
            <person name="Li S."/>
            <person name="Li H."/>
            <person name="Zhou J."/>
            <person name="Ni P."/>
            <person name="Dong W."/>
            <person name="Hu S."/>
            <person name="Zeng C."/>
            <person name="Zhang J."/>
            <person name="Zhang Y."/>
            <person name="Li R."/>
            <person name="Xu Z."/>
            <person name="Li S."/>
            <person name="Li X."/>
            <person name="Zheng H."/>
            <person name="Cong L."/>
            <person name="Lin L."/>
            <person name="Yin J."/>
            <person name="Geng J."/>
            <person name="Li G."/>
            <person name="Shi J."/>
            <person name="Liu J."/>
            <person name="Lv H."/>
            <person name="Li J."/>
            <person name="Wang J."/>
            <person name="Deng Y."/>
            <person name="Ran L."/>
            <person name="Shi X."/>
            <person name="Wang X."/>
            <person name="Wu Q."/>
            <person name="Li C."/>
            <person name="Ren X."/>
            <person name="Wang J."/>
            <person name="Wang X."/>
            <person name="Li D."/>
            <person name="Liu D."/>
            <person name="Zhang X."/>
            <person name="Ji Z."/>
            <person name="Zhao W."/>
            <person name="Sun Y."/>
            <person name="Zhang Z."/>
            <person name="Bao J."/>
            <person name="Han Y."/>
            <person name="Dong L."/>
            <person name="Ji J."/>
            <person name="Chen P."/>
            <person name="Wu S."/>
            <person name="Liu J."/>
            <person name="Xiao Y."/>
            <person name="Bu D."/>
            <person name="Tan J."/>
            <person name="Yang L."/>
            <person name="Ye C."/>
            <person name="Zhang J."/>
            <person name="Xu J."/>
            <person name="Zhou Y."/>
            <person name="Yu Y."/>
            <person name="Zhang B."/>
            <person name="Zhuang S."/>
            <person name="Wei H."/>
            <person name="Liu B."/>
            <person name="Lei M."/>
            <person name="Yu H."/>
            <person name="Li Y."/>
            <person name="Xu H."/>
            <person name="Wei S."/>
            <person name="He X."/>
            <person name="Fang L."/>
            <person name="Zhang Z."/>
            <person name="Zhang Y."/>
            <person name="Huang X."/>
            <person name="Su Z."/>
            <person name="Tong W."/>
            <person name="Li J."/>
            <person name="Tong Z."/>
            <person name="Li S."/>
            <person name="Ye J."/>
            <person name="Wang L."/>
            <person name="Fang L."/>
            <person name="Lei T."/>
            <person name="Chen C.-S."/>
            <person name="Chen H.-C."/>
            <person name="Xu Z."/>
            <person name="Li H."/>
            <person name="Huang H."/>
            <person name="Zhang F."/>
            <person name="Xu H."/>
            <person name="Li N."/>
            <person name="Zhao C."/>
            <person name="Li S."/>
            <person name="Dong L."/>
            <person name="Huang Y."/>
            <person name="Li L."/>
            <person name="Xi Y."/>
            <person name="Qi Q."/>
            <person name="Li W."/>
            <person name="Zhang B."/>
            <person name="Hu W."/>
            <person name="Zhang Y."/>
            <person name="Tian X."/>
            <person name="Jiao Y."/>
            <person name="Liang X."/>
            <person name="Jin J."/>
            <person name="Gao L."/>
            <person name="Zheng W."/>
            <person name="Hao B."/>
            <person name="Liu S.-M."/>
            <person name="Wang W."/>
            <person name="Yuan L."/>
            <person name="Cao M."/>
            <person name="McDermott J."/>
            <person name="Samudrala R."/>
            <person name="Wang J."/>
            <person name="Wong G.K.-S."/>
            <person name="Yang H."/>
        </authorList>
    </citation>
    <scope>NUCLEOTIDE SEQUENCE [LARGE SCALE GENOMIC DNA]</scope>
    <source>
        <strain>cv. 93-11</strain>
    </source>
</reference>
<reference key="3">
    <citation type="journal article" date="2008" name="Plant Mol. Biol.">
        <title>A genome-wide survey of HD-Zip genes in rice and analysis of drought-responsive family members.</title>
        <authorList>
            <person name="Agalou A."/>
            <person name="Purwantomo S."/>
            <person name="Oevernaes E."/>
            <person name="Johannesson H."/>
            <person name="Zhu X."/>
            <person name="Estiati A."/>
            <person name="de Kam R.J."/>
            <person name="Engstroem P."/>
            <person name="Slamet-Loedin I.H."/>
            <person name="Zhu Z."/>
            <person name="Wang M."/>
            <person name="Xiong L."/>
            <person name="Meijer A.H."/>
            <person name="Ouwerkerk P.B.F."/>
        </authorList>
    </citation>
    <scope>NUCLEOTIDE SEQUENCE [MRNA] OF 1-147</scope>
    <scope>TISSUE SPECIFICITY</scope>
    <scope>INDUCTION</scope>
    <scope>GENE FAMILY</scope>
    <scope>NOMENCLATURE</scope>
    <source>
        <strain>cv. Minghui 86</strain>
    </source>
</reference>
<reference key="4">
    <citation type="journal article" date="2008" name="Plant Mol. Biol.">
        <title>Functional analysis of rice HOMEOBOX4 (Oshox4) gene reveals a negative function in gibberellin responses.</title>
        <authorList>
            <person name="Dai M."/>
            <person name="Hu Y."/>
            <person name="Ma Q."/>
            <person name="Zhao Y."/>
            <person name="Zhou D.-X."/>
        </authorList>
    </citation>
    <scope>FUNCTION</scope>
    <scope>SUBCELLULAR LOCATION</scope>
    <scope>TISSUE SPECIFICITY</scope>
    <scope>INDUCTION</scope>
</reference>
<name>HOX4_ORYSI</name>
<organism>
    <name type="scientific">Oryza sativa subsp. indica</name>
    <name type="common">Rice</name>
    <dbReference type="NCBI Taxonomy" id="39946"/>
    <lineage>
        <taxon>Eukaryota</taxon>
        <taxon>Viridiplantae</taxon>
        <taxon>Streptophyta</taxon>
        <taxon>Embryophyta</taxon>
        <taxon>Tracheophyta</taxon>
        <taxon>Spermatophyta</taxon>
        <taxon>Magnoliopsida</taxon>
        <taxon>Liliopsida</taxon>
        <taxon>Poales</taxon>
        <taxon>Poaceae</taxon>
        <taxon>BOP clade</taxon>
        <taxon>Oryzoideae</taxon>
        <taxon>Oryzeae</taxon>
        <taxon>Oryzinae</taxon>
        <taxon>Oryza</taxon>
        <taxon>Oryza sativa</taxon>
    </lineage>
</organism>